<comment type="function">
    <text evidence="1">Catalyzes the irreversible NADPH-dependent deamination of GMP to IMP. It functions in the conversion of nucleobase, nucleoside and nucleotide derivatives of G to A nucleotides, and in maintaining the intracellular balance of A and G nucleotides.</text>
</comment>
<comment type="catalytic activity">
    <reaction evidence="1">
        <text>IMP + NH4(+) + NADP(+) = GMP + NADPH + 2 H(+)</text>
        <dbReference type="Rhea" id="RHEA:17185"/>
        <dbReference type="ChEBI" id="CHEBI:15378"/>
        <dbReference type="ChEBI" id="CHEBI:28938"/>
        <dbReference type="ChEBI" id="CHEBI:57783"/>
        <dbReference type="ChEBI" id="CHEBI:58053"/>
        <dbReference type="ChEBI" id="CHEBI:58115"/>
        <dbReference type="ChEBI" id="CHEBI:58349"/>
        <dbReference type="EC" id="1.7.1.7"/>
    </reaction>
</comment>
<comment type="similarity">
    <text evidence="1">Belongs to the IMPDH/GMPR family. GuaC type 2 subfamily.</text>
</comment>
<feature type="chain" id="PRO_1000146143" description="GMP reductase">
    <location>
        <begin position="1"/>
        <end position="328"/>
    </location>
</feature>
<feature type="active site" description="Thioimidate intermediate" evidence="1">
    <location>
        <position position="176"/>
    </location>
</feature>
<feature type="binding site" evidence="1">
    <location>
        <begin position="205"/>
        <end position="228"/>
    </location>
    <ligand>
        <name>NADP(+)</name>
        <dbReference type="ChEBI" id="CHEBI:58349"/>
    </ligand>
</feature>
<reference key="1">
    <citation type="journal article" date="2009" name="BMC Genomics">
        <title>Genome evolution driven by host adaptations results in a more virulent and antimicrobial-resistant Streptococcus pneumoniae serotype 14.</title>
        <authorList>
            <person name="Ding F."/>
            <person name="Tang P."/>
            <person name="Hsu M.-H."/>
            <person name="Cui P."/>
            <person name="Hu S."/>
            <person name="Yu J."/>
            <person name="Chiu C.-H."/>
        </authorList>
    </citation>
    <scope>NUCLEOTIDE SEQUENCE [LARGE SCALE GENOMIC DNA]</scope>
    <source>
        <strain>CGSP14</strain>
    </source>
</reference>
<protein>
    <recommendedName>
        <fullName evidence="1">GMP reductase</fullName>
        <ecNumber evidence="1">1.7.1.7</ecNumber>
    </recommendedName>
    <alternativeName>
        <fullName evidence="1">Guanosine 5'-monophosphate oxidoreductase</fullName>
        <shortName evidence="1">Guanosine monophosphate reductase</shortName>
    </alternativeName>
</protein>
<evidence type="ECO:0000255" key="1">
    <source>
        <dbReference type="HAMAP-Rule" id="MF_01511"/>
    </source>
</evidence>
<organism>
    <name type="scientific">Streptococcus pneumoniae (strain CGSP14)</name>
    <dbReference type="NCBI Taxonomy" id="516950"/>
    <lineage>
        <taxon>Bacteria</taxon>
        <taxon>Bacillati</taxon>
        <taxon>Bacillota</taxon>
        <taxon>Bacilli</taxon>
        <taxon>Lactobacillales</taxon>
        <taxon>Streptococcaceae</taxon>
        <taxon>Streptococcus</taxon>
    </lineage>
</organism>
<keyword id="KW-0521">NADP</keyword>
<keyword id="KW-0560">Oxidoreductase</keyword>
<name>GUAC_STRPS</name>
<accession>B2IPN4</accession>
<sequence length="328" mass="35939">MLNEFPIFDYEDIQLIPNKCVIKSRAEADTSVTLGNHTFKLPVVPANMQTILDENVAEQLAKGGYFYIMHRFDEVGRIPFIKRMHDQGLIASISVGVKDYEYDFVSQLKADAPEYITIDIAHGHADSVISMIQHIKKELPDTFVIAGNVGTPEAVRELENAGADATKVGIGPGKVCITKVKTGFGTGGWQLAALRWCAKVARKPIIADGGIRTHGDIAKSIRFGASMIMIGSLFAGHIESPGKTIEVDGEQFKEYYGSASQYQKGAYKNVEGKRILLPAKGHLQDTLTEMEQDLQSAISYAGGRQVADLKHVDYVIVKNSIWNGDASH</sequence>
<gene>
    <name evidence="1" type="primary">guaC</name>
    <name type="ordered locus">SPCG_1054</name>
</gene>
<dbReference type="EC" id="1.7.1.7" evidence="1"/>
<dbReference type="EMBL" id="CP001033">
    <property type="protein sequence ID" value="ACB90306.1"/>
    <property type="molecule type" value="Genomic_DNA"/>
</dbReference>
<dbReference type="RefSeq" id="WP_000931187.1">
    <property type="nucleotide sequence ID" value="NC_010582.1"/>
</dbReference>
<dbReference type="SMR" id="B2IPN4"/>
<dbReference type="KEGG" id="spw:SPCG_1054"/>
<dbReference type="HOGENOM" id="CLU_022552_5_0_9"/>
<dbReference type="GO" id="GO:0005829">
    <property type="term" value="C:cytosol"/>
    <property type="evidence" value="ECO:0007669"/>
    <property type="project" value="TreeGrafter"/>
</dbReference>
<dbReference type="GO" id="GO:1902560">
    <property type="term" value="C:GMP reductase complex"/>
    <property type="evidence" value="ECO:0007669"/>
    <property type="project" value="InterPro"/>
</dbReference>
<dbReference type="GO" id="GO:0003920">
    <property type="term" value="F:GMP reductase activity"/>
    <property type="evidence" value="ECO:0007669"/>
    <property type="project" value="UniProtKB-UniRule"/>
</dbReference>
<dbReference type="GO" id="GO:0006163">
    <property type="term" value="P:purine nucleotide metabolic process"/>
    <property type="evidence" value="ECO:0007669"/>
    <property type="project" value="UniProtKB-UniRule"/>
</dbReference>
<dbReference type="CDD" id="cd00381">
    <property type="entry name" value="IMPDH"/>
    <property type="match status" value="1"/>
</dbReference>
<dbReference type="FunFam" id="3.20.20.70:FF:000079">
    <property type="entry name" value="GMP reductase"/>
    <property type="match status" value="1"/>
</dbReference>
<dbReference type="Gene3D" id="3.20.20.70">
    <property type="entry name" value="Aldolase class I"/>
    <property type="match status" value="1"/>
</dbReference>
<dbReference type="HAMAP" id="MF_01511">
    <property type="entry name" value="GMP_reduct_type2"/>
    <property type="match status" value="1"/>
</dbReference>
<dbReference type="InterPro" id="IPR013785">
    <property type="entry name" value="Aldolase_TIM"/>
</dbReference>
<dbReference type="InterPro" id="IPR050139">
    <property type="entry name" value="GMP_reductase"/>
</dbReference>
<dbReference type="InterPro" id="IPR005994">
    <property type="entry name" value="GuaC_type_2"/>
</dbReference>
<dbReference type="InterPro" id="IPR015875">
    <property type="entry name" value="IMP_DH/GMP_Rdtase_CS"/>
</dbReference>
<dbReference type="InterPro" id="IPR001093">
    <property type="entry name" value="IMP_DH_GMPRt"/>
</dbReference>
<dbReference type="NCBIfam" id="TIGR01306">
    <property type="entry name" value="GMP_reduct_2"/>
    <property type="match status" value="1"/>
</dbReference>
<dbReference type="NCBIfam" id="NF003966">
    <property type="entry name" value="PRK05458.1"/>
    <property type="match status" value="1"/>
</dbReference>
<dbReference type="PANTHER" id="PTHR43170">
    <property type="entry name" value="GMP REDUCTASE"/>
    <property type="match status" value="1"/>
</dbReference>
<dbReference type="PANTHER" id="PTHR43170:SF5">
    <property type="entry name" value="GMP REDUCTASE"/>
    <property type="match status" value="1"/>
</dbReference>
<dbReference type="Pfam" id="PF00478">
    <property type="entry name" value="IMPDH"/>
    <property type="match status" value="1"/>
</dbReference>
<dbReference type="PIRSF" id="PIRSF036500">
    <property type="entry name" value="GMP_red_Firmic"/>
    <property type="match status" value="1"/>
</dbReference>
<dbReference type="SMART" id="SM01240">
    <property type="entry name" value="IMPDH"/>
    <property type="match status" value="1"/>
</dbReference>
<dbReference type="SUPFAM" id="SSF51412">
    <property type="entry name" value="Inosine monophosphate dehydrogenase (IMPDH)"/>
    <property type="match status" value="1"/>
</dbReference>
<dbReference type="PROSITE" id="PS00487">
    <property type="entry name" value="IMP_DH_GMP_RED"/>
    <property type="match status" value="1"/>
</dbReference>
<proteinExistence type="inferred from homology"/>